<evidence type="ECO:0000250" key="1"/>
<evidence type="ECO:0000256" key="2">
    <source>
        <dbReference type="SAM" id="MobiDB-lite"/>
    </source>
</evidence>
<evidence type="ECO:0000305" key="3"/>
<dbReference type="EMBL" id="AY705785">
    <property type="protein sequence ID" value="AAU14889.1"/>
    <property type="molecule type" value="Genomic_RNA"/>
</dbReference>
<dbReference type="RefSeq" id="YP_086755.1">
    <property type="nucleotide sequence ID" value="NC_006276.1"/>
</dbReference>
<dbReference type="GeneID" id="5076438"/>
<dbReference type="KEGG" id="vg:5076438"/>
<dbReference type="Proteomes" id="UP000001672">
    <property type="component" value="Genome"/>
</dbReference>
<dbReference type="GO" id="GO:0039615">
    <property type="term" value="C:T=1 icosahedral viral capsid"/>
    <property type="evidence" value="ECO:0007669"/>
    <property type="project" value="UniProtKB-KW"/>
</dbReference>
<proteinExistence type="inferred from homology"/>
<sequence length="487" mass="54163">MNQDTPLANLNGPEVPSGNVPPANPPGRTNVAPPAQGAVQQPPAPAARRARNPHGPVPPAGPSRSAGAPAMLELSAAYPMYTEQRRAPNYYVPDAQLLFHTLGVCDQLMTTTDRFLRSMPSWLPIVSQLYVSVLWNVMILKVYVNTGYGAAYAHDLDVLLNHLQINECMIPGPLVPFFQSLAAVNGPFDWIGDIIPAMPSFTELWTDEFAPHAAYARQIPIPAILLDQLYRFATLAFDAQLQTNYATFEWYSNIFNQDVNTHNARLRLGPQLCGSLFTTQAQCDSARAFWNPAFANGFTRIDAANGPLMAFPQLLGFISQDGALQSNWFMHISLIMHKYAQYFNGSVPLKSISPVGIGASVIYGTPLEDTNVRDWLYPAAAAIAPFRSTRFLPRRELPATLAVRFAHADHEIEEQAEQYSILCHTNMKWYVNNATQNNHTAIEGNYIHQGEYWNFTPFRYSPPVSLKTQFAQVIASRYHQQAANRAE</sequence>
<name>CAPSD_WCCVB</name>
<reference key="1">
    <citation type="journal article" date="2005" name="Arch. Virol.">
        <title>Complete sequence of the RNA2 of an isolate of White clover cryptic virus 1, type species of the genus Alphacryptovirus.</title>
        <authorList>
            <person name="Boccardo G."/>
            <person name="Candresse T."/>
        </authorList>
    </citation>
    <scope>NUCLEOTIDE SEQUENCE [GENOMIC RNA]</scope>
</reference>
<accession>Q64FN9</accession>
<organismHost>
    <name type="scientific">Trifolium repens</name>
    <name type="common">Creeping white clover</name>
    <dbReference type="NCBI Taxonomy" id="3899"/>
</organismHost>
<keyword id="KW-0167">Capsid protein</keyword>
<keyword id="KW-1185">Reference proteome</keyword>
<keyword id="KW-1140">T=1 icosahedral capsid protein</keyword>
<keyword id="KW-0946">Virion</keyword>
<organism>
    <name type="scientific">White clover cryptic virus 1 (isolate Boccardo/2004)</name>
    <name type="common">WCCV-1</name>
    <dbReference type="NCBI Taxonomy" id="654934"/>
    <lineage>
        <taxon>Viruses</taxon>
        <taxon>Riboviria</taxon>
        <taxon>Orthornavirae</taxon>
        <taxon>Pisuviricota</taxon>
        <taxon>Duplopiviricetes</taxon>
        <taxon>Durnavirales</taxon>
        <taxon>Partitiviridae</taxon>
        <taxon>Alphapartitivirus</taxon>
        <taxon>White clover cryptic virus 1</taxon>
    </lineage>
</organism>
<protein>
    <recommendedName>
        <fullName>Capsid protein</fullName>
        <shortName>CP</shortName>
    </recommendedName>
    <alternativeName>
        <fullName>Coat protein</fullName>
    </alternativeName>
</protein>
<feature type="chain" id="PRO_0000402793" description="Capsid protein">
    <location>
        <begin position="1"/>
        <end position="487"/>
    </location>
</feature>
<feature type="region of interest" description="Disordered" evidence="2">
    <location>
        <begin position="1"/>
        <end position="66"/>
    </location>
</feature>
<feature type="compositionally biased region" description="Low complexity" evidence="2">
    <location>
        <begin position="30"/>
        <end position="41"/>
    </location>
</feature>
<comment type="function">
    <text evidence="1">The capsid protein self-assembles to form an icosahedral capsid with a T=2 symmetry made of 120 subunits.</text>
</comment>
<comment type="subcellular location">
    <subcellularLocation>
        <location evidence="3">Virion</location>
    </subcellularLocation>
</comment>